<reference key="1">
    <citation type="journal article" date="2004" name="Proc. Natl. Acad. Sci. U.S.A.">
        <title>Complete genomes of two clinical Staphylococcus aureus strains: evidence for the rapid evolution of virulence and drug resistance.</title>
        <authorList>
            <person name="Holden M.T.G."/>
            <person name="Feil E.J."/>
            <person name="Lindsay J.A."/>
            <person name="Peacock S.J."/>
            <person name="Day N.P.J."/>
            <person name="Enright M.C."/>
            <person name="Foster T.J."/>
            <person name="Moore C.E."/>
            <person name="Hurst L."/>
            <person name="Atkin R."/>
            <person name="Barron A."/>
            <person name="Bason N."/>
            <person name="Bentley S.D."/>
            <person name="Chillingworth C."/>
            <person name="Chillingworth T."/>
            <person name="Churcher C."/>
            <person name="Clark L."/>
            <person name="Corton C."/>
            <person name="Cronin A."/>
            <person name="Doggett J."/>
            <person name="Dowd L."/>
            <person name="Feltwell T."/>
            <person name="Hance Z."/>
            <person name="Harris B."/>
            <person name="Hauser H."/>
            <person name="Holroyd S."/>
            <person name="Jagels K."/>
            <person name="James K.D."/>
            <person name="Lennard N."/>
            <person name="Line A."/>
            <person name="Mayes R."/>
            <person name="Moule S."/>
            <person name="Mungall K."/>
            <person name="Ormond D."/>
            <person name="Quail M.A."/>
            <person name="Rabbinowitsch E."/>
            <person name="Rutherford K.M."/>
            <person name="Sanders M."/>
            <person name="Sharp S."/>
            <person name="Simmonds M."/>
            <person name="Stevens K."/>
            <person name="Whitehead S."/>
            <person name="Barrell B.G."/>
            <person name="Spratt B.G."/>
            <person name="Parkhill J."/>
        </authorList>
    </citation>
    <scope>NUCLEOTIDE SEQUENCE [LARGE SCALE GENOMIC DNA]</scope>
    <source>
        <strain>MRSA252</strain>
    </source>
</reference>
<sequence length="185" mass="20554">MISVNDFKTGLTISVDNAIWKVIDFQHVKPGKGSAFVRSKLRNLRTGAIQEKTFRAGEKVEPAMIENRRMQYLYADGDNHVFMDNESFEQTELSSDYLKEELNYLKEGMEVQIQTYEGETIGVELPKTVELTVTETEPGIKGDTATGATKSATVETGYTLNVPLFVNEGDVLIINTGDGSYISRG</sequence>
<organism>
    <name type="scientific">Staphylococcus aureus (strain MRSA252)</name>
    <dbReference type="NCBI Taxonomy" id="282458"/>
    <lineage>
        <taxon>Bacteria</taxon>
        <taxon>Bacillati</taxon>
        <taxon>Bacillota</taxon>
        <taxon>Bacilli</taxon>
        <taxon>Bacillales</taxon>
        <taxon>Staphylococcaceae</taxon>
        <taxon>Staphylococcus</taxon>
    </lineage>
</organism>
<comment type="function">
    <text evidence="1">Involved in peptide bond synthesis. Stimulates efficient translation and peptide-bond synthesis on native or reconstituted 70S ribosomes in vitro. Probably functions indirectly by altering the affinity of the ribosome for aminoacyl-tRNA, thus increasing their reactivity as acceptors for peptidyl transferase.</text>
</comment>
<comment type="pathway">
    <text evidence="1">Protein biosynthesis; polypeptide chain elongation.</text>
</comment>
<comment type="subcellular location">
    <subcellularLocation>
        <location evidence="1">Cytoplasm</location>
    </subcellularLocation>
</comment>
<comment type="similarity">
    <text evidence="1">Belongs to the elongation factor P family.</text>
</comment>
<keyword id="KW-0963">Cytoplasm</keyword>
<keyword id="KW-0251">Elongation factor</keyword>
<keyword id="KW-0648">Protein biosynthesis</keyword>
<feature type="chain" id="PRO_0000094331" description="Elongation factor P">
    <location>
        <begin position="1"/>
        <end position="185"/>
    </location>
</feature>
<proteinExistence type="inferred from homology"/>
<protein>
    <recommendedName>
        <fullName evidence="1">Elongation factor P</fullName>
        <shortName evidence="1">EF-P</shortName>
    </recommendedName>
</protein>
<name>EFP_STAAR</name>
<evidence type="ECO:0000255" key="1">
    <source>
        <dbReference type="HAMAP-Rule" id="MF_00141"/>
    </source>
</evidence>
<dbReference type="EMBL" id="BX571856">
    <property type="protein sequence ID" value="CAG40601.1"/>
    <property type="molecule type" value="Genomic_DNA"/>
</dbReference>
<dbReference type="RefSeq" id="WP_000626504.1">
    <property type="nucleotide sequence ID" value="NC_002952.2"/>
</dbReference>
<dbReference type="SMR" id="Q6GGH0"/>
<dbReference type="KEGG" id="sar:SAR1606"/>
<dbReference type="HOGENOM" id="CLU_074944_0_1_9"/>
<dbReference type="UniPathway" id="UPA00345"/>
<dbReference type="Proteomes" id="UP000000596">
    <property type="component" value="Chromosome"/>
</dbReference>
<dbReference type="GO" id="GO:0005737">
    <property type="term" value="C:cytoplasm"/>
    <property type="evidence" value="ECO:0007669"/>
    <property type="project" value="UniProtKB-SubCell"/>
</dbReference>
<dbReference type="GO" id="GO:0003746">
    <property type="term" value="F:translation elongation factor activity"/>
    <property type="evidence" value="ECO:0007669"/>
    <property type="project" value="UniProtKB-UniRule"/>
</dbReference>
<dbReference type="GO" id="GO:0043043">
    <property type="term" value="P:peptide biosynthetic process"/>
    <property type="evidence" value="ECO:0007669"/>
    <property type="project" value="InterPro"/>
</dbReference>
<dbReference type="CDD" id="cd04470">
    <property type="entry name" value="S1_EF-P_repeat_1"/>
    <property type="match status" value="1"/>
</dbReference>
<dbReference type="CDD" id="cd05794">
    <property type="entry name" value="S1_EF-P_repeat_2"/>
    <property type="match status" value="1"/>
</dbReference>
<dbReference type="FunFam" id="2.30.30.30:FF:000010">
    <property type="entry name" value="Elongation factor P"/>
    <property type="match status" value="1"/>
</dbReference>
<dbReference type="FunFam" id="2.40.50.140:FF:000004">
    <property type="entry name" value="Elongation factor P"/>
    <property type="match status" value="1"/>
</dbReference>
<dbReference type="FunFam" id="2.40.50.140:FF:000009">
    <property type="entry name" value="Elongation factor P"/>
    <property type="match status" value="1"/>
</dbReference>
<dbReference type="Gene3D" id="2.30.30.30">
    <property type="match status" value="1"/>
</dbReference>
<dbReference type="Gene3D" id="2.40.50.140">
    <property type="entry name" value="Nucleic acid-binding proteins"/>
    <property type="match status" value="2"/>
</dbReference>
<dbReference type="HAMAP" id="MF_00141">
    <property type="entry name" value="EF_P"/>
    <property type="match status" value="1"/>
</dbReference>
<dbReference type="InterPro" id="IPR015365">
    <property type="entry name" value="Elong-fact-P_C"/>
</dbReference>
<dbReference type="InterPro" id="IPR012340">
    <property type="entry name" value="NA-bd_OB-fold"/>
</dbReference>
<dbReference type="InterPro" id="IPR014722">
    <property type="entry name" value="Rib_uL2_dom2"/>
</dbReference>
<dbReference type="InterPro" id="IPR020599">
    <property type="entry name" value="Transl_elong_fac_P/YeiP"/>
</dbReference>
<dbReference type="InterPro" id="IPR013185">
    <property type="entry name" value="Transl_elong_KOW-like"/>
</dbReference>
<dbReference type="InterPro" id="IPR001059">
    <property type="entry name" value="Transl_elong_P/YeiP_cen"/>
</dbReference>
<dbReference type="InterPro" id="IPR013852">
    <property type="entry name" value="Transl_elong_P/YeiP_CS"/>
</dbReference>
<dbReference type="InterPro" id="IPR011768">
    <property type="entry name" value="Transl_elongation_fac_P"/>
</dbReference>
<dbReference type="InterPro" id="IPR008991">
    <property type="entry name" value="Translation_prot_SH3-like_sf"/>
</dbReference>
<dbReference type="NCBIfam" id="TIGR00038">
    <property type="entry name" value="efp"/>
    <property type="match status" value="1"/>
</dbReference>
<dbReference type="NCBIfam" id="NF001810">
    <property type="entry name" value="PRK00529.1"/>
    <property type="match status" value="1"/>
</dbReference>
<dbReference type="PANTHER" id="PTHR30053">
    <property type="entry name" value="ELONGATION FACTOR P"/>
    <property type="match status" value="1"/>
</dbReference>
<dbReference type="PANTHER" id="PTHR30053:SF12">
    <property type="entry name" value="ELONGATION FACTOR P (EF-P) FAMILY PROTEIN"/>
    <property type="match status" value="1"/>
</dbReference>
<dbReference type="Pfam" id="PF01132">
    <property type="entry name" value="EFP"/>
    <property type="match status" value="1"/>
</dbReference>
<dbReference type="Pfam" id="PF08207">
    <property type="entry name" value="EFP_N"/>
    <property type="match status" value="1"/>
</dbReference>
<dbReference type="Pfam" id="PF09285">
    <property type="entry name" value="Elong-fact-P_C"/>
    <property type="match status" value="1"/>
</dbReference>
<dbReference type="PIRSF" id="PIRSF005901">
    <property type="entry name" value="EF-P"/>
    <property type="match status" value="1"/>
</dbReference>
<dbReference type="SMART" id="SM01185">
    <property type="entry name" value="EFP"/>
    <property type="match status" value="1"/>
</dbReference>
<dbReference type="SMART" id="SM00841">
    <property type="entry name" value="Elong-fact-P_C"/>
    <property type="match status" value="1"/>
</dbReference>
<dbReference type="SUPFAM" id="SSF50249">
    <property type="entry name" value="Nucleic acid-binding proteins"/>
    <property type="match status" value="2"/>
</dbReference>
<dbReference type="SUPFAM" id="SSF50104">
    <property type="entry name" value="Translation proteins SH3-like domain"/>
    <property type="match status" value="1"/>
</dbReference>
<dbReference type="PROSITE" id="PS01275">
    <property type="entry name" value="EFP"/>
    <property type="match status" value="1"/>
</dbReference>
<gene>
    <name evidence="1" type="primary">efp</name>
    <name type="ordered locus">SAR1606</name>
</gene>
<accession>Q6GGH0</accession>